<keyword id="KW-0963">Cytoplasm</keyword>
<keyword id="KW-0255">Endonuclease</keyword>
<keyword id="KW-0378">Hydrolase</keyword>
<keyword id="KW-0464">Manganese</keyword>
<keyword id="KW-0479">Metal-binding</keyword>
<keyword id="KW-0540">Nuclease</keyword>
<keyword id="KW-1185">Reference proteome</keyword>
<sequence>MPGSWPPRTVIRKSSGLRTLESALYRNGLGPVAGVDEVGRGACAGPLVVAACVLGPNRLESLAALDDSKKLGEKERERLFPLIRRYALAYHVVFIPSHEVDRRGVHVANIEGMRRAVAGLSVRPGYVLSDGFRVPGLSVPSLPVIGGDAAAACIAAASVLAKVSRDRLMVEMEEQHPGYGFAEHKGYITPAHTAALTRHGPCVEHRYSYVNVRRAAEATGVRWASDRVGVRWSTESAAETEEVRRALEAFEVEWVTAPVEHEDAACAKMGSG</sequence>
<evidence type="ECO:0000255" key="1">
    <source>
        <dbReference type="HAMAP-Rule" id="MF_00052"/>
    </source>
</evidence>
<evidence type="ECO:0000255" key="2">
    <source>
        <dbReference type="PROSITE-ProRule" id="PRU01319"/>
    </source>
</evidence>
<evidence type="ECO:0000305" key="3"/>
<protein>
    <recommendedName>
        <fullName evidence="1">Ribonuclease HII</fullName>
        <shortName evidence="1">RNase HII</shortName>
        <ecNumber evidence="1">3.1.26.4</ecNumber>
    </recommendedName>
</protein>
<comment type="function">
    <text evidence="1">Endonuclease that specifically degrades the RNA of RNA-DNA hybrids.</text>
</comment>
<comment type="catalytic activity">
    <reaction evidence="1">
        <text>Endonucleolytic cleavage to 5'-phosphomonoester.</text>
        <dbReference type="EC" id="3.1.26.4"/>
    </reaction>
</comment>
<comment type="cofactor">
    <cofactor evidence="1">
        <name>Mn(2+)</name>
        <dbReference type="ChEBI" id="CHEBI:29035"/>
    </cofactor>
    <cofactor evidence="1">
        <name>Mg(2+)</name>
        <dbReference type="ChEBI" id="CHEBI:18420"/>
    </cofactor>
    <text evidence="1">Manganese or magnesium. Binds 1 divalent metal ion per monomer in the absence of substrate. May bind a second metal ion after substrate binding.</text>
</comment>
<comment type="subcellular location">
    <subcellularLocation>
        <location evidence="1">Cytoplasm</location>
    </subcellularLocation>
</comment>
<comment type="similarity">
    <text evidence="1">Belongs to the RNase HII family.</text>
</comment>
<comment type="sequence caution" evidence="3">
    <conflict type="erroneous initiation">
        <sequence resource="EMBL-CDS" id="AFP38849"/>
    </conflict>
    <text>Truncated N-terminus.</text>
</comment>
<name>RNH2_MYCS2</name>
<dbReference type="EC" id="3.1.26.4" evidence="1"/>
<dbReference type="EMBL" id="CP000480">
    <property type="protein sequence ID" value="ABK73838.1"/>
    <property type="molecule type" value="Genomic_DNA"/>
</dbReference>
<dbReference type="EMBL" id="CP001663">
    <property type="protein sequence ID" value="AFP38849.1"/>
    <property type="status" value="ALT_INIT"/>
    <property type="molecule type" value="Genomic_DNA"/>
</dbReference>
<dbReference type="RefSeq" id="WP_011728344.1">
    <property type="nucleotide sequence ID" value="NZ_SIJM01000012.1"/>
</dbReference>
<dbReference type="RefSeq" id="YP_886782.1">
    <property type="nucleotide sequence ID" value="NC_008596.1"/>
</dbReference>
<dbReference type="SMR" id="A0QV44"/>
<dbReference type="STRING" id="246196.MSMEG_2442"/>
<dbReference type="PaxDb" id="246196-MSMEI_2381"/>
<dbReference type="KEGG" id="msb:LJ00_12145"/>
<dbReference type="KEGG" id="msg:MSMEI_2381"/>
<dbReference type="KEGG" id="msm:MSMEG_2442"/>
<dbReference type="PATRIC" id="fig|246196.19.peg.2407"/>
<dbReference type="eggNOG" id="COG0164">
    <property type="taxonomic scope" value="Bacteria"/>
</dbReference>
<dbReference type="OrthoDB" id="9803420at2"/>
<dbReference type="BRENDA" id="3.1.26.4">
    <property type="organism ID" value="3512"/>
</dbReference>
<dbReference type="Proteomes" id="UP000000757">
    <property type="component" value="Chromosome"/>
</dbReference>
<dbReference type="Proteomes" id="UP000006158">
    <property type="component" value="Chromosome"/>
</dbReference>
<dbReference type="GO" id="GO:0005737">
    <property type="term" value="C:cytoplasm"/>
    <property type="evidence" value="ECO:0007669"/>
    <property type="project" value="UniProtKB-SubCell"/>
</dbReference>
<dbReference type="GO" id="GO:0032299">
    <property type="term" value="C:ribonuclease H2 complex"/>
    <property type="evidence" value="ECO:0007669"/>
    <property type="project" value="TreeGrafter"/>
</dbReference>
<dbReference type="GO" id="GO:0030145">
    <property type="term" value="F:manganese ion binding"/>
    <property type="evidence" value="ECO:0007669"/>
    <property type="project" value="UniProtKB-UniRule"/>
</dbReference>
<dbReference type="GO" id="GO:0003723">
    <property type="term" value="F:RNA binding"/>
    <property type="evidence" value="ECO:0007669"/>
    <property type="project" value="InterPro"/>
</dbReference>
<dbReference type="GO" id="GO:0004523">
    <property type="term" value="F:RNA-DNA hybrid ribonuclease activity"/>
    <property type="evidence" value="ECO:0007669"/>
    <property type="project" value="UniProtKB-UniRule"/>
</dbReference>
<dbReference type="GO" id="GO:0043137">
    <property type="term" value="P:DNA replication, removal of RNA primer"/>
    <property type="evidence" value="ECO:0007669"/>
    <property type="project" value="TreeGrafter"/>
</dbReference>
<dbReference type="GO" id="GO:0006298">
    <property type="term" value="P:mismatch repair"/>
    <property type="evidence" value="ECO:0007669"/>
    <property type="project" value="TreeGrafter"/>
</dbReference>
<dbReference type="CDD" id="cd07182">
    <property type="entry name" value="RNase_HII_bacteria_HII_like"/>
    <property type="match status" value="1"/>
</dbReference>
<dbReference type="FunFam" id="3.30.420.10:FF:000113">
    <property type="entry name" value="Ribonuclease HII"/>
    <property type="match status" value="1"/>
</dbReference>
<dbReference type="Gene3D" id="3.30.420.10">
    <property type="entry name" value="Ribonuclease H-like superfamily/Ribonuclease H"/>
    <property type="match status" value="1"/>
</dbReference>
<dbReference type="HAMAP" id="MF_00052_B">
    <property type="entry name" value="RNase_HII_B"/>
    <property type="match status" value="1"/>
</dbReference>
<dbReference type="InterPro" id="IPR022898">
    <property type="entry name" value="RNase_HII"/>
</dbReference>
<dbReference type="InterPro" id="IPR001352">
    <property type="entry name" value="RNase_HII/HIII"/>
</dbReference>
<dbReference type="InterPro" id="IPR024567">
    <property type="entry name" value="RNase_HII/HIII_dom"/>
</dbReference>
<dbReference type="InterPro" id="IPR012337">
    <property type="entry name" value="RNaseH-like_sf"/>
</dbReference>
<dbReference type="InterPro" id="IPR036397">
    <property type="entry name" value="RNaseH_sf"/>
</dbReference>
<dbReference type="NCBIfam" id="NF000595">
    <property type="entry name" value="PRK00015.1-3"/>
    <property type="match status" value="1"/>
</dbReference>
<dbReference type="NCBIfam" id="NF000598">
    <property type="entry name" value="PRK00015.2-2"/>
    <property type="match status" value="1"/>
</dbReference>
<dbReference type="NCBIfam" id="NF000600">
    <property type="entry name" value="PRK00015.2-4"/>
    <property type="match status" value="1"/>
</dbReference>
<dbReference type="PANTHER" id="PTHR10954">
    <property type="entry name" value="RIBONUCLEASE H2 SUBUNIT A"/>
    <property type="match status" value="1"/>
</dbReference>
<dbReference type="PANTHER" id="PTHR10954:SF18">
    <property type="entry name" value="RIBONUCLEASE HII"/>
    <property type="match status" value="1"/>
</dbReference>
<dbReference type="Pfam" id="PF01351">
    <property type="entry name" value="RNase_HII"/>
    <property type="match status" value="1"/>
</dbReference>
<dbReference type="SUPFAM" id="SSF53098">
    <property type="entry name" value="Ribonuclease H-like"/>
    <property type="match status" value="1"/>
</dbReference>
<dbReference type="PROSITE" id="PS51975">
    <property type="entry name" value="RNASE_H_2"/>
    <property type="match status" value="1"/>
</dbReference>
<organism>
    <name type="scientific">Mycolicibacterium smegmatis (strain ATCC 700084 / mc(2)155)</name>
    <name type="common">Mycobacterium smegmatis</name>
    <dbReference type="NCBI Taxonomy" id="246196"/>
    <lineage>
        <taxon>Bacteria</taxon>
        <taxon>Bacillati</taxon>
        <taxon>Actinomycetota</taxon>
        <taxon>Actinomycetes</taxon>
        <taxon>Mycobacteriales</taxon>
        <taxon>Mycobacteriaceae</taxon>
        <taxon>Mycolicibacterium</taxon>
    </lineage>
</organism>
<gene>
    <name evidence="1" type="primary">rnhB</name>
    <name type="ordered locus">MSMEG_2442</name>
    <name type="ordered locus">MSMEI_2381</name>
</gene>
<accession>A0QV44</accession>
<accession>I7G8A3</accession>
<feature type="chain" id="PRO_1000031164" description="Ribonuclease HII">
    <location>
        <begin position="1"/>
        <end position="272"/>
    </location>
</feature>
<feature type="domain" description="RNase H type-2" evidence="2">
    <location>
        <begin position="30"/>
        <end position="221"/>
    </location>
</feature>
<feature type="binding site" evidence="1">
    <location>
        <position position="36"/>
    </location>
    <ligand>
        <name>a divalent metal cation</name>
        <dbReference type="ChEBI" id="CHEBI:60240"/>
    </ligand>
</feature>
<feature type="binding site" evidence="1">
    <location>
        <position position="37"/>
    </location>
    <ligand>
        <name>a divalent metal cation</name>
        <dbReference type="ChEBI" id="CHEBI:60240"/>
    </ligand>
</feature>
<feature type="binding site" evidence="1">
    <location>
        <position position="130"/>
    </location>
    <ligand>
        <name>a divalent metal cation</name>
        <dbReference type="ChEBI" id="CHEBI:60240"/>
    </ligand>
</feature>
<reference key="1">
    <citation type="submission" date="2006-10" db="EMBL/GenBank/DDBJ databases">
        <authorList>
            <person name="Fleischmann R.D."/>
            <person name="Dodson R.J."/>
            <person name="Haft D.H."/>
            <person name="Merkel J.S."/>
            <person name="Nelson W.C."/>
            <person name="Fraser C.M."/>
        </authorList>
    </citation>
    <scope>NUCLEOTIDE SEQUENCE [LARGE SCALE GENOMIC DNA]</scope>
    <source>
        <strain>ATCC 700084 / mc(2)155</strain>
    </source>
</reference>
<reference key="2">
    <citation type="journal article" date="2007" name="Genome Biol.">
        <title>Interrupted coding sequences in Mycobacterium smegmatis: authentic mutations or sequencing errors?</title>
        <authorList>
            <person name="Deshayes C."/>
            <person name="Perrodou E."/>
            <person name="Gallien S."/>
            <person name="Euphrasie D."/>
            <person name="Schaeffer C."/>
            <person name="Van-Dorsselaer A."/>
            <person name="Poch O."/>
            <person name="Lecompte O."/>
            <person name="Reyrat J.-M."/>
        </authorList>
    </citation>
    <scope>NUCLEOTIDE SEQUENCE [LARGE SCALE GENOMIC DNA]</scope>
    <source>
        <strain>ATCC 700084 / mc(2)155</strain>
    </source>
</reference>
<reference key="3">
    <citation type="journal article" date="2009" name="Genome Res.">
        <title>Ortho-proteogenomics: multiple proteomes investigation through orthology and a new MS-based protocol.</title>
        <authorList>
            <person name="Gallien S."/>
            <person name="Perrodou E."/>
            <person name="Carapito C."/>
            <person name="Deshayes C."/>
            <person name="Reyrat J.-M."/>
            <person name="Van Dorsselaer A."/>
            <person name="Poch O."/>
            <person name="Schaeffer C."/>
            <person name="Lecompte O."/>
        </authorList>
    </citation>
    <scope>NUCLEOTIDE SEQUENCE [LARGE SCALE GENOMIC DNA]</scope>
    <source>
        <strain>ATCC 700084 / mc(2)155</strain>
    </source>
</reference>
<proteinExistence type="inferred from homology"/>